<comment type="subcellular location">
    <subcellularLocation>
        <location evidence="2">Membrane</location>
        <topology evidence="2">Multi-pass membrane protein</topology>
    </subcellularLocation>
</comment>
<comment type="similarity">
    <text evidence="2">Belongs to the alphaherpesvirinae HHV-1 UL43 family.</text>
</comment>
<proteinExistence type="inferred from homology"/>
<keyword id="KW-0472">Membrane</keyword>
<keyword id="KW-0812">Transmembrane</keyword>
<keyword id="KW-1133">Transmembrane helix</keyword>
<accession>P22597</accession>
<organismHost>
    <name type="scientific">Equus caballus</name>
    <name type="common">Horse</name>
    <dbReference type="NCBI Taxonomy" id="9796"/>
</organismHost>
<name>MB43_EHV4</name>
<organism>
    <name type="scientific">Equine herpesvirus 4 (strain 1942)</name>
    <name type="common">EHV-4</name>
    <name type="synonym">Equine rhinopneumonitis virus</name>
    <dbReference type="NCBI Taxonomy" id="10333"/>
    <lineage>
        <taxon>Viruses</taxon>
        <taxon>Duplodnaviria</taxon>
        <taxon>Heunggongvirae</taxon>
        <taxon>Peploviricota</taxon>
        <taxon>Herviviricetes</taxon>
        <taxon>Herpesvirales</taxon>
        <taxon>Orthoherpesviridae</taxon>
        <taxon>Alphaherpesvirinae</taxon>
        <taxon>Varicellovirus</taxon>
        <taxon>Varicellovirus equidalpha4</taxon>
        <taxon>Equid alphaherpesvirus 4</taxon>
    </lineage>
</organism>
<reference key="1">
    <citation type="journal article" date="1990" name="Virology">
        <title>The nucleotide sequence of the equine herpesvirus 4 gC gene homologue.</title>
        <authorList>
            <person name="Nicolson L."/>
            <person name="Onions D.E."/>
        </authorList>
    </citation>
    <scope>NUCLEOTIDE SEQUENCE [GENOMIC DNA]</scope>
</reference>
<feature type="chain" id="PRO_0000116084" description="Membrane protein UL43 homolog">
    <location>
        <begin position="1" status="less than"/>
        <end position="76"/>
    </location>
</feature>
<feature type="transmembrane region" description="Helical" evidence="1">
    <location>
        <begin position="7"/>
        <end position="27"/>
    </location>
</feature>
<feature type="transmembrane region" description="Helical" evidence="1">
    <location>
        <begin position="54"/>
        <end position="74"/>
    </location>
</feature>
<feature type="non-terminal residue">
    <location>
        <position position="1"/>
    </location>
</feature>
<evidence type="ECO:0000255" key="1"/>
<evidence type="ECO:0000305" key="2"/>
<protein>
    <recommendedName>
        <fullName>Membrane protein UL43 homolog</fullName>
    </recommendedName>
    <alternativeName>
        <fullName>Membrane protein ORF1</fullName>
    </alternativeName>
</protein>
<sequence length="76" mass="7942">IHATAHAVCVVLAAFGYWVAAPISLAFTTSGGVLGALYLRKRATGASRLAATHISRWLIVSVYVAAGLCYATIITH</sequence>
<dbReference type="EMBL" id="M58031">
    <property type="protein sequence ID" value="AAA46082.1"/>
    <property type="molecule type" value="Genomic_DNA"/>
</dbReference>
<dbReference type="PIR" id="A45343">
    <property type="entry name" value="A45343"/>
</dbReference>
<dbReference type="GO" id="GO:0016020">
    <property type="term" value="C:membrane"/>
    <property type="evidence" value="ECO:0007669"/>
    <property type="project" value="UniProtKB-SubCell"/>
</dbReference>